<protein>
    <recommendedName>
        <fullName evidence="1">Uridine kinase</fullName>
        <ecNumber evidence="1">2.7.1.48</ecNumber>
    </recommendedName>
    <alternativeName>
        <fullName evidence="1">Cytidine monophosphokinase</fullName>
    </alternativeName>
    <alternativeName>
        <fullName evidence="1">Uridine monophosphokinase</fullName>
    </alternativeName>
</protein>
<reference key="1">
    <citation type="submission" date="2009-02" db="EMBL/GenBank/DDBJ databases">
        <title>Genome sequence of Bacillus cereus 03BB102.</title>
        <authorList>
            <person name="Dodson R.J."/>
            <person name="Jackson P."/>
            <person name="Munk A.C."/>
            <person name="Brettin T."/>
            <person name="Bruce D."/>
            <person name="Detter C."/>
            <person name="Tapia R."/>
            <person name="Han C."/>
            <person name="Sutton G."/>
            <person name="Sims D."/>
        </authorList>
    </citation>
    <scope>NUCLEOTIDE SEQUENCE [LARGE SCALE GENOMIC DNA]</scope>
    <source>
        <strain>03BB102</strain>
    </source>
</reference>
<proteinExistence type="inferred from homology"/>
<dbReference type="EC" id="2.7.1.48" evidence="1"/>
<dbReference type="EMBL" id="CP001407">
    <property type="protein sequence ID" value="ACO27566.1"/>
    <property type="molecule type" value="Genomic_DNA"/>
</dbReference>
<dbReference type="RefSeq" id="WP_000537085.1">
    <property type="nucleotide sequence ID" value="NZ_CP009318.1"/>
</dbReference>
<dbReference type="SMR" id="C1ESS5"/>
<dbReference type="KEGG" id="bcx:BCA_4492"/>
<dbReference type="PATRIC" id="fig|572264.18.peg.4440"/>
<dbReference type="UniPathway" id="UPA00574">
    <property type="reaction ID" value="UER00637"/>
</dbReference>
<dbReference type="UniPathway" id="UPA00579">
    <property type="reaction ID" value="UER00640"/>
</dbReference>
<dbReference type="Proteomes" id="UP000002210">
    <property type="component" value="Chromosome"/>
</dbReference>
<dbReference type="GO" id="GO:0005737">
    <property type="term" value="C:cytoplasm"/>
    <property type="evidence" value="ECO:0007669"/>
    <property type="project" value="UniProtKB-SubCell"/>
</dbReference>
<dbReference type="GO" id="GO:0005524">
    <property type="term" value="F:ATP binding"/>
    <property type="evidence" value="ECO:0007669"/>
    <property type="project" value="UniProtKB-UniRule"/>
</dbReference>
<dbReference type="GO" id="GO:0043771">
    <property type="term" value="F:cytidine kinase activity"/>
    <property type="evidence" value="ECO:0007669"/>
    <property type="project" value="RHEA"/>
</dbReference>
<dbReference type="GO" id="GO:0004849">
    <property type="term" value="F:uridine kinase activity"/>
    <property type="evidence" value="ECO:0007669"/>
    <property type="project" value="UniProtKB-UniRule"/>
</dbReference>
<dbReference type="GO" id="GO:0044211">
    <property type="term" value="P:CTP salvage"/>
    <property type="evidence" value="ECO:0007669"/>
    <property type="project" value="UniProtKB-UniRule"/>
</dbReference>
<dbReference type="GO" id="GO:0044206">
    <property type="term" value="P:UMP salvage"/>
    <property type="evidence" value="ECO:0007669"/>
    <property type="project" value="UniProtKB-UniRule"/>
</dbReference>
<dbReference type="CDD" id="cd02023">
    <property type="entry name" value="UMPK"/>
    <property type="match status" value="1"/>
</dbReference>
<dbReference type="Gene3D" id="3.40.50.300">
    <property type="entry name" value="P-loop containing nucleotide triphosphate hydrolases"/>
    <property type="match status" value="1"/>
</dbReference>
<dbReference type="HAMAP" id="MF_00551">
    <property type="entry name" value="Uridine_kinase"/>
    <property type="match status" value="1"/>
</dbReference>
<dbReference type="InterPro" id="IPR027417">
    <property type="entry name" value="P-loop_NTPase"/>
</dbReference>
<dbReference type="InterPro" id="IPR006083">
    <property type="entry name" value="PRK/URK"/>
</dbReference>
<dbReference type="InterPro" id="IPR026008">
    <property type="entry name" value="Uridine_kinase"/>
</dbReference>
<dbReference type="InterPro" id="IPR000764">
    <property type="entry name" value="Uridine_kinase-like"/>
</dbReference>
<dbReference type="NCBIfam" id="NF004018">
    <property type="entry name" value="PRK05480.1"/>
    <property type="match status" value="1"/>
</dbReference>
<dbReference type="NCBIfam" id="TIGR00235">
    <property type="entry name" value="udk"/>
    <property type="match status" value="1"/>
</dbReference>
<dbReference type="PANTHER" id="PTHR10285">
    <property type="entry name" value="URIDINE KINASE"/>
    <property type="match status" value="1"/>
</dbReference>
<dbReference type="Pfam" id="PF00485">
    <property type="entry name" value="PRK"/>
    <property type="match status" value="1"/>
</dbReference>
<dbReference type="PRINTS" id="PR00988">
    <property type="entry name" value="URIDINKINASE"/>
</dbReference>
<dbReference type="SUPFAM" id="SSF52540">
    <property type="entry name" value="P-loop containing nucleoside triphosphate hydrolases"/>
    <property type="match status" value="1"/>
</dbReference>
<sequence length="212" mass="24338">MGTNKPVVIGIAGGSGSGKTSVTKAIFDHFKGHSILILEQDYYYKDQSHLPMEERLKTNYDHPLAFDNDLLIEHLQQLLAYKQVDKPVYDYTLHTRSEEIIPVEPKDVIILEGILILEDPRLCELMDIKLFVDTDADLRILRRMQRDIKERGRTMDSVIDQYVNVVRPMHNQFIEPSKKFADIIIPEGGQNHVAIDIMVTKIATILEQKVNL</sequence>
<accession>C1ESS5</accession>
<organism>
    <name type="scientific">Bacillus cereus (strain 03BB102)</name>
    <dbReference type="NCBI Taxonomy" id="572264"/>
    <lineage>
        <taxon>Bacteria</taxon>
        <taxon>Bacillati</taxon>
        <taxon>Bacillota</taxon>
        <taxon>Bacilli</taxon>
        <taxon>Bacillales</taxon>
        <taxon>Bacillaceae</taxon>
        <taxon>Bacillus</taxon>
        <taxon>Bacillus cereus group</taxon>
    </lineage>
</organism>
<gene>
    <name evidence="1" type="primary">udk</name>
    <name type="ordered locus">BCA_4492</name>
</gene>
<keyword id="KW-0067">ATP-binding</keyword>
<keyword id="KW-0963">Cytoplasm</keyword>
<keyword id="KW-0418">Kinase</keyword>
<keyword id="KW-0547">Nucleotide-binding</keyword>
<keyword id="KW-0808">Transferase</keyword>
<feature type="chain" id="PRO_1000200505" description="Uridine kinase">
    <location>
        <begin position="1"/>
        <end position="212"/>
    </location>
</feature>
<feature type="binding site" evidence="1">
    <location>
        <begin position="13"/>
        <end position="20"/>
    </location>
    <ligand>
        <name>ATP</name>
        <dbReference type="ChEBI" id="CHEBI:30616"/>
    </ligand>
</feature>
<evidence type="ECO:0000255" key="1">
    <source>
        <dbReference type="HAMAP-Rule" id="MF_00551"/>
    </source>
</evidence>
<comment type="catalytic activity">
    <reaction evidence="1">
        <text>uridine + ATP = UMP + ADP + H(+)</text>
        <dbReference type="Rhea" id="RHEA:16825"/>
        <dbReference type="ChEBI" id="CHEBI:15378"/>
        <dbReference type="ChEBI" id="CHEBI:16704"/>
        <dbReference type="ChEBI" id="CHEBI:30616"/>
        <dbReference type="ChEBI" id="CHEBI:57865"/>
        <dbReference type="ChEBI" id="CHEBI:456216"/>
        <dbReference type="EC" id="2.7.1.48"/>
    </reaction>
</comment>
<comment type="catalytic activity">
    <reaction evidence="1">
        <text>cytidine + ATP = CMP + ADP + H(+)</text>
        <dbReference type="Rhea" id="RHEA:24674"/>
        <dbReference type="ChEBI" id="CHEBI:15378"/>
        <dbReference type="ChEBI" id="CHEBI:17562"/>
        <dbReference type="ChEBI" id="CHEBI:30616"/>
        <dbReference type="ChEBI" id="CHEBI:60377"/>
        <dbReference type="ChEBI" id="CHEBI:456216"/>
        <dbReference type="EC" id="2.7.1.48"/>
    </reaction>
</comment>
<comment type="pathway">
    <text evidence="1">Pyrimidine metabolism; CTP biosynthesis via salvage pathway; CTP from cytidine: step 1/3.</text>
</comment>
<comment type="pathway">
    <text evidence="1">Pyrimidine metabolism; UMP biosynthesis via salvage pathway; UMP from uridine: step 1/1.</text>
</comment>
<comment type="subcellular location">
    <subcellularLocation>
        <location evidence="1">Cytoplasm</location>
    </subcellularLocation>
</comment>
<comment type="similarity">
    <text evidence="1">Belongs to the uridine kinase family.</text>
</comment>
<name>URK_BACC3</name>